<feature type="chain" id="PRO_0000106167" description="Uncharacterized 16.2 kDa protein in gene 29 5'region">
    <location>
        <begin position="1"/>
        <end position="148"/>
    </location>
</feature>
<proteinExistence type="predicted"/>
<accession>P31653</accession>
<dbReference type="EMBL" id="X60728">
    <property type="protein sequence ID" value="CAA43135.1"/>
    <property type="molecule type" value="Genomic_DNA"/>
</dbReference>
<dbReference type="PIR" id="S21504">
    <property type="entry name" value="S21504"/>
</dbReference>
<dbReference type="RefSeq" id="YP_002300409.1">
    <property type="nucleotide sequence ID" value="NC_011421.1"/>
</dbReference>
<dbReference type="GeneID" id="7009127"/>
<dbReference type="KEGG" id="vg:7009127"/>
<name>YG29_BPSP1</name>
<sequence length="148" mass="16183">MNQQMVLKIGGVVVDPQPVKVESKYTGELEVTRKKVVHRMLDIIIPVGLATKLTMALSPGALAAAGVDSADKIRRGFHDIIDVFTALAEPILWFYALTACVLIATKNKNAGWERLKNVGYAYAGIALLPTFFSFLRWVSSIVSSSITF</sequence>
<protein>
    <recommendedName>
        <fullName>Uncharacterized 16.2 kDa protein in gene 29 5'region</fullName>
    </recommendedName>
</protein>
<organismHost>
    <name type="scientific">Bacillus subtilis</name>
    <dbReference type="NCBI Taxonomy" id="1423"/>
</organismHost>
<organism>
    <name type="scientific">Bacillus phage SP01</name>
    <name type="common">Bacteriophage SP01</name>
    <dbReference type="NCBI Taxonomy" id="2884427"/>
    <lineage>
        <taxon>Viruses</taxon>
        <taxon>Duplodnaviria</taxon>
        <taxon>Heunggongvirae</taxon>
        <taxon>Uroviricota</taxon>
        <taxon>Caudoviricetes</taxon>
        <taxon>Herelleviridae</taxon>
        <taxon>Spounavirinae</taxon>
        <taxon>Okubovirus</taxon>
        <taxon>Okubovirus SPO1</taxon>
    </lineage>
</organism>
<reference key="1">
    <citation type="journal article" date="1992" name="Virology">
        <title>Deoxyuridylate-hydroxymethylase of bacteriophage SPO1.</title>
        <authorList>
            <person name="Wilhelm K."/>
            <person name="Rueger W."/>
        </authorList>
    </citation>
    <scope>NUCLEOTIDE SEQUENCE [GENOMIC DNA]</scope>
    <source>
        <strain>WT</strain>
    </source>
</reference>